<dbReference type="EC" id="4.1.1.23" evidence="1"/>
<dbReference type="EMBL" id="AE017321">
    <property type="protein sequence ID" value="AAW71375.1"/>
    <property type="molecule type" value="Genomic_DNA"/>
</dbReference>
<dbReference type="RefSeq" id="WP_011256984.1">
    <property type="nucleotide sequence ID" value="NC_006833.1"/>
</dbReference>
<dbReference type="SMR" id="Q5GRJ9"/>
<dbReference type="STRING" id="292805.Wbm0787"/>
<dbReference type="KEGG" id="wbm:Wbm0787"/>
<dbReference type="eggNOG" id="COG0284">
    <property type="taxonomic scope" value="Bacteria"/>
</dbReference>
<dbReference type="HOGENOM" id="CLU_067069_1_0_5"/>
<dbReference type="UniPathway" id="UPA00070">
    <property type="reaction ID" value="UER00120"/>
</dbReference>
<dbReference type="Proteomes" id="UP000000534">
    <property type="component" value="Chromosome"/>
</dbReference>
<dbReference type="GO" id="GO:0005829">
    <property type="term" value="C:cytosol"/>
    <property type="evidence" value="ECO:0007669"/>
    <property type="project" value="TreeGrafter"/>
</dbReference>
<dbReference type="GO" id="GO:0004590">
    <property type="term" value="F:orotidine-5'-phosphate decarboxylase activity"/>
    <property type="evidence" value="ECO:0007669"/>
    <property type="project" value="UniProtKB-UniRule"/>
</dbReference>
<dbReference type="GO" id="GO:0006207">
    <property type="term" value="P:'de novo' pyrimidine nucleobase biosynthetic process"/>
    <property type="evidence" value="ECO:0007669"/>
    <property type="project" value="InterPro"/>
</dbReference>
<dbReference type="GO" id="GO:0044205">
    <property type="term" value="P:'de novo' UMP biosynthetic process"/>
    <property type="evidence" value="ECO:0007669"/>
    <property type="project" value="UniProtKB-UniRule"/>
</dbReference>
<dbReference type="CDD" id="cd04725">
    <property type="entry name" value="OMP_decarboxylase_like"/>
    <property type="match status" value="1"/>
</dbReference>
<dbReference type="Gene3D" id="3.20.20.70">
    <property type="entry name" value="Aldolase class I"/>
    <property type="match status" value="1"/>
</dbReference>
<dbReference type="HAMAP" id="MF_01200_B">
    <property type="entry name" value="OMPdecase_type1_B"/>
    <property type="match status" value="1"/>
</dbReference>
<dbReference type="InterPro" id="IPR013785">
    <property type="entry name" value="Aldolase_TIM"/>
</dbReference>
<dbReference type="InterPro" id="IPR014732">
    <property type="entry name" value="OMPdecase"/>
</dbReference>
<dbReference type="InterPro" id="IPR018089">
    <property type="entry name" value="OMPdecase_AS"/>
</dbReference>
<dbReference type="InterPro" id="IPR047596">
    <property type="entry name" value="OMPdecase_bac"/>
</dbReference>
<dbReference type="InterPro" id="IPR001754">
    <property type="entry name" value="OMPdeCOase_dom"/>
</dbReference>
<dbReference type="InterPro" id="IPR011060">
    <property type="entry name" value="RibuloseP-bd_barrel"/>
</dbReference>
<dbReference type="NCBIfam" id="NF001273">
    <property type="entry name" value="PRK00230.1"/>
    <property type="match status" value="1"/>
</dbReference>
<dbReference type="NCBIfam" id="TIGR01740">
    <property type="entry name" value="pyrF"/>
    <property type="match status" value="1"/>
</dbReference>
<dbReference type="PANTHER" id="PTHR32119">
    <property type="entry name" value="OROTIDINE 5'-PHOSPHATE DECARBOXYLASE"/>
    <property type="match status" value="1"/>
</dbReference>
<dbReference type="PANTHER" id="PTHR32119:SF2">
    <property type="entry name" value="OROTIDINE 5'-PHOSPHATE DECARBOXYLASE"/>
    <property type="match status" value="1"/>
</dbReference>
<dbReference type="Pfam" id="PF00215">
    <property type="entry name" value="OMPdecase"/>
    <property type="match status" value="1"/>
</dbReference>
<dbReference type="SMART" id="SM00934">
    <property type="entry name" value="OMPdecase"/>
    <property type="match status" value="1"/>
</dbReference>
<dbReference type="SUPFAM" id="SSF51366">
    <property type="entry name" value="Ribulose-phoshate binding barrel"/>
    <property type="match status" value="1"/>
</dbReference>
<dbReference type="PROSITE" id="PS00156">
    <property type="entry name" value="OMPDECASE"/>
    <property type="match status" value="1"/>
</dbReference>
<feature type="chain" id="PRO_0000241929" description="Orotidine 5'-phosphate decarboxylase">
    <location>
        <begin position="1"/>
        <end position="225"/>
    </location>
</feature>
<feature type="active site" description="Proton donor" evidence="1">
    <location>
        <position position="60"/>
    </location>
</feature>
<feature type="binding site" evidence="1">
    <location>
        <position position="9"/>
    </location>
    <ligand>
        <name>substrate</name>
    </ligand>
</feature>
<feature type="binding site" evidence="1">
    <location>
        <position position="31"/>
    </location>
    <ligand>
        <name>substrate</name>
    </ligand>
</feature>
<feature type="binding site" evidence="1">
    <location>
        <begin position="58"/>
        <end position="67"/>
    </location>
    <ligand>
        <name>substrate</name>
    </ligand>
</feature>
<feature type="binding site" evidence="1">
    <location>
        <position position="115"/>
    </location>
    <ligand>
        <name>substrate</name>
    </ligand>
</feature>
<feature type="binding site" evidence="1">
    <location>
        <position position="176"/>
    </location>
    <ligand>
        <name>substrate</name>
    </ligand>
</feature>
<feature type="binding site" evidence="1">
    <location>
        <position position="184"/>
    </location>
    <ligand>
        <name>substrate</name>
    </ligand>
</feature>
<feature type="binding site" evidence="1">
    <location>
        <position position="204"/>
    </location>
    <ligand>
        <name>substrate</name>
    </ligand>
</feature>
<feature type="binding site" evidence="1">
    <location>
        <position position="205"/>
    </location>
    <ligand>
        <name>substrate</name>
    </ligand>
</feature>
<organism>
    <name type="scientific">Wolbachia sp. subsp. Brugia malayi (strain TRS)</name>
    <dbReference type="NCBI Taxonomy" id="292805"/>
    <lineage>
        <taxon>Bacteria</taxon>
        <taxon>Pseudomonadati</taxon>
        <taxon>Pseudomonadota</taxon>
        <taxon>Alphaproteobacteria</taxon>
        <taxon>Rickettsiales</taxon>
        <taxon>Anaplasmataceae</taxon>
        <taxon>Wolbachieae</taxon>
        <taxon>Wolbachia</taxon>
    </lineage>
</organism>
<name>PYRF_WOLTR</name>
<accession>Q5GRJ9</accession>
<evidence type="ECO:0000255" key="1">
    <source>
        <dbReference type="HAMAP-Rule" id="MF_01200"/>
    </source>
</evidence>
<keyword id="KW-0210">Decarboxylase</keyword>
<keyword id="KW-0456">Lyase</keyword>
<keyword id="KW-0665">Pyrimidine biosynthesis</keyword>
<keyword id="KW-1185">Reference proteome</keyword>
<reference key="1">
    <citation type="journal article" date="2005" name="PLoS Biol.">
        <title>The Wolbachia genome of Brugia malayi: endosymbiont evolution within a human pathogenic nematode.</title>
        <authorList>
            <person name="Foster J."/>
            <person name="Ganatra M."/>
            <person name="Kamal I."/>
            <person name="Ware J."/>
            <person name="Makarova K."/>
            <person name="Ivanova N."/>
            <person name="Bhattacharyya A."/>
            <person name="Kapatral V."/>
            <person name="Kumar S."/>
            <person name="Posfai J."/>
            <person name="Vincze T."/>
            <person name="Ingram J."/>
            <person name="Moran L."/>
            <person name="Lapidus A."/>
            <person name="Omelchenko M."/>
            <person name="Kyrpides N."/>
            <person name="Ghedin E."/>
            <person name="Wang S."/>
            <person name="Goltsman E."/>
            <person name="Joukov V."/>
            <person name="Ostrovskaya O."/>
            <person name="Tsukerman K."/>
            <person name="Mazur M."/>
            <person name="Comb D."/>
            <person name="Koonin E."/>
            <person name="Slatko B."/>
        </authorList>
    </citation>
    <scope>NUCLEOTIDE SEQUENCE [LARGE SCALE GENOMIC DNA]</scope>
    <source>
        <strain>TRS</strain>
    </source>
</reference>
<gene>
    <name evidence="1" type="primary">pyrF</name>
    <name type="ordered locus">Wbm0787</name>
</gene>
<comment type="function">
    <text evidence="1">Catalyzes the decarboxylation of orotidine 5'-monophosphate (OMP) to uridine 5'-monophosphate (UMP).</text>
</comment>
<comment type="catalytic activity">
    <reaction evidence="1">
        <text>orotidine 5'-phosphate + H(+) = UMP + CO2</text>
        <dbReference type="Rhea" id="RHEA:11596"/>
        <dbReference type="ChEBI" id="CHEBI:15378"/>
        <dbReference type="ChEBI" id="CHEBI:16526"/>
        <dbReference type="ChEBI" id="CHEBI:57538"/>
        <dbReference type="ChEBI" id="CHEBI:57865"/>
        <dbReference type="EC" id="4.1.1.23"/>
    </reaction>
</comment>
<comment type="pathway">
    <text evidence="1">Pyrimidine metabolism; UMP biosynthesis via de novo pathway; UMP from orotate: step 2/2.</text>
</comment>
<comment type="subunit">
    <text evidence="1">Homodimer.</text>
</comment>
<comment type="similarity">
    <text evidence="1">Belongs to the OMP decarboxylase family. Type 1 subfamily.</text>
</comment>
<sequence>MNPIICALDTQDLNEAISLANTLRDKVGMIKLGLEFFAAHGPSGVREVAKCNVPTFLDLKLHDIPNTVAKTVEAIKVLNIEILTLHISGGTKMLEEALSIVKDTKTKLIGVTVLTSMSNEDLSELGIAREVKSQVILFAKLAKKVGLHGIVCSALEAQEVYQECGKDFKIITSGIRVGFGHDDQKRTATPKEAINSGADYIVIGRPITKSNSPANSAELILKSLS</sequence>
<protein>
    <recommendedName>
        <fullName evidence="1">Orotidine 5'-phosphate decarboxylase</fullName>
        <ecNumber evidence="1">4.1.1.23</ecNumber>
    </recommendedName>
    <alternativeName>
        <fullName evidence="1">OMP decarboxylase</fullName>
        <shortName evidence="1">OMPDCase</shortName>
        <shortName evidence="1">OMPdecase</shortName>
    </alternativeName>
</protein>
<proteinExistence type="inferred from homology"/>